<name>MNME_STRA5</name>
<protein>
    <recommendedName>
        <fullName evidence="1">tRNA modification GTPase MnmE</fullName>
        <ecNumber evidence="1">3.6.-.-</ecNumber>
    </recommendedName>
</protein>
<dbReference type="EC" id="3.6.-.-" evidence="1"/>
<dbReference type="EMBL" id="AE009948">
    <property type="protein sequence ID" value="AAM99762.1"/>
    <property type="molecule type" value="Genomic_DNA"/>
</dbReference>
<dbReference type="RefSeq" id="NP_687890.1">
    <property type="nucleotide sequence ID" value="NC_004116.1"/>
</dbReference>
<dbReference type="RefSeq" id="WP_000028893.1">
    <property type="nucleotide sequence ID" value="NC_004116.1"/>
</dbReference>
<dbReference type="SMR" id="Q8CX13"/>
<dbReference type="STRING" id="208435.SAG0876"/>
<dbReference type="KEGG" id="sag:SAG0876"/>
<dbReference type="PATRIC" id="fig|208435.3.peg.883"/>
<dbReference type="HOGENOM" id="CLU_019624_4_1_9"/>
<dbReference type="OrthoDB" id="9805918at2"/>
<dbReference type="Proteomes" id="UP000000821">
    <property type="component" value="Chromosome"/>
</dbReference>
<dbReference type="GO" id="GO:0005829">
    <property type="term" value="C:cytosol"/>
    <property type="evidence" value="ECO:0007669"/>
    <property type="project" value="TreeGrafter"/>
</dbReference>
<dbReference type="GO" id="GO:0005525">
    <property type="term" value="F:GTP binding"/>
    <property type="evidence" value="ECO:0007669"/>
    <property type="project" value="UniProtKB-UniRule"/>
</dbReference>
<dbReference type="GO" id="GO:0003924">
    <property type="term" value="F:GTPase activity"/>
    <property type="evidence" value="ECO:0007669"/>
    <property type="project" value="UniProtKB-UniRule"/>
</dbReference>
<dbReference type="GO" id="GO:0046872">
    <property type="term" value="F:metal ion binding"/>
    <property type="evidence" value="ECO:0007669"/>
    <property type="project" value="UniProtKB-KW"/>
</dbReference>
<dbReference type="GO" id="GO:0030488">
    <property type="term" value="P:tRNA methylation"/>
    <property type="evidence" value="ECO:0007669"/>
    <property type="project" value="TreeGrafter"/>
</dbReference>
<dbReference type="GO" id="GO:0002098">
    <property type="term" value="P:tRNA wobble uridine modification"/>
    <property type="evidence" value="ECO:0007669"/>
    <property type="project" value="TreeGrafter"/>
</dbReference>
<dbReference type="CDD" id="cd04164">
    <property type="entry name" value="trmE"/>
    <property type="match status" value="1"/>
</dbReference>
<dbReference type="CDD" id="cd14858">
    <property type="entry name" value="TrmE_N"/>
    <property type="match status" value="1"/>
</dbReference>
<dbReference type="FunFam" id="3.30.1360.120:FF:000003">
    <property type="entry name" value="tRNA modification GTPase MnmE"/>
    <property type="match status" value="1"/>
</dbReference>
<dbReference type="FunFam" id="3.40.50.300:FF:000494">
    <property type="entry name" value="tRNA modification GTPase MnmE"/>
    <property type="match status" value="1"/>
</dbReference>
<dbReference type="Gene3D" id="3.40.50.300">
    <property type="entry name" value="P-loop containing nucleotide triphosphate hydrolases"/>
    <property type="match status" value="1"/>
</dbReference>
<dbReference type="Gene3D" id="3.30.1360.120">
    <property type="entry name" value="Probable tRNA modification gtpase trme, domain 1"/>
    <property type="match status" value="1"/>
</dbReference>
<dbReference type="Gene3D" id="1.20.120.430">
    <property type="entry name" value="tRNA modification GTPase MnmE domain 2"/>
    <property type="match status" value="1"/>
</dbReference>
<dbReference type="HAMAP" id="MF_00379">
    <property type="entry name" value="GTPase_MnmE"/>
    <property type="match status" value="1"/>
</dbReference>
<dbReference type="InterPro" id="IPR031168">
    <property type="entry name" value="G_TrmE"/>
</dbReference>
<dbReference type="InterPro" id="IPR006073">
    <property type="entry name" value="GTP-bd"/>
</dbReference>
<dbReference type="InterPro" id="IPR018948">
    <property type="entry name" value="GTP-bd_TrmE_N"/>
</dbReference>
<dbReference type="InterPro" id="IPR004520">
    <property type="entry name" value="GTPase_MnmE"/>
</dbReference>
<dbReference type="InterPro" id="IPR027368">
    <property type="entry name" value="MnmE_dom2"/>
</dbReference>
<dbReference type="InterPro" id="IPR025867">
    <property type="entry name" value="MnmE_helical"/>
</dbReference>
<dbReference type="InterPro" id="IPR027417">
    <property type="entry name" value="P-loop_NTPase"/>
</dbReference>
<dbReference type="InterPro" id="IPR005225">
    <property type="entry name" value="Small_GTP-bd"/>
</dbReference>
<dbReference type="InterPro" id="IPR027266">
    <property type="entry name" value="TrmE/GcvT_dom1"/>
</dbReference>
<dbReference type="NCBIfam" id="TIGR00450">
    <property type="entry name" value="mnmE_trmE_thdF"/>
    <property type="match status" value="1"/>
</dbReference>
<dbReference type="NCBIfam" id="NF003661">
    <property type="entry name" value="PRK05291.1-3"/>
    <property type="match status" value="1"/>
</dbReference>
<dbReference type="NCBIfam" id="TIGR00231">
    <property type="entry name" value="small_GTP"/>
    <property type="match status" value="1"/>
</dbReference>
<dbReference type="PANTHER" id="PTHR42714">
    <property type="entry name" value="TRNA MODIFICATION GTPASE GTPBP3"/>
    <property type="match status" value="1"/>
</dbReference>
<dbReference type="PANTHER" id="PTHR42714:SF2">
    <property type="entry name" value="TRNA MODIFICATION GTPASE GTPBP3, MITOCHONDRIAL"/>
    <property type="match status" value="1"/>
</dbReference>
<dbReference type="Pfam" id="PF01926">
    <property type="entry name" value="MMR_HSR1"/>
    <property type="match status" value="1"/>
</dbReference>
<dbReference type="Pfam" id="PF12631">
    <property type="entry name" value="MnmE_helical"/>
    <property type="match status" value="1"/>
</dbReference>
<dbReference type="Pfam" id="PF10396">
    <property type="entry name" value="TrmE_N"/>
    <property type="match status" value="1"/>
</dbReference>
<dbReference type="SUPFAM" id="SSF52540">
    <property type="entry name" value="P-loop containing nucleoside triphosphate hydrolases"/>
    <property type="match status" value="1"/>
</dbReference>
<dbReference type="PROSITE" id="PS51709">
    <property type="entry name" value="G_TRME"/>
    <property type="match status" value="1"/>
</dbReference>
<accession>Q8CX13</accession>
<gene>
    <name evidence="1" type="primary">mnmE</name>
    <name evidence="1" type="synonym">trmE</name>
    <name type="ordered locus">SAG0876</name>
</gene>
<reference key="1">
    <citation type="journal article" date="2002" name="Proc. Natl. Acad. Sci. U.S.A.">
        <title>Complete genome sequence and comparative genomic analysis of an emerging human pathogen, serotype V Streptococcus agalactiae.</title>
        <authorList>
            <person name="Tettelin H."/>
            <person name="Masignani V."/>
            <person name="Cieslewicz M.J."/>
            <person name="Eisen J.A."/>
            <person name="Peterson S.N."/>
            <person name="Wessels M.R."/>
            <person name="Paulsen I.T."/>
            <person name="Nelson K.E."/>
            <person name="Margarit I."/>
            <person name="Read T.D."/>
            <person name="Madoff L.C."/>
            <person name="Wolf A.M."/>
            <person name="Beanan M.J."/>
            <person name="Brinkac L.M."/>
            <person name="Daugherty S.C."/>
            <person name="DeBoy R.T."/>
            <person name="Durkin A.S."/>
            <person name="Kolonay J.F."/>
            <person name="Madupu R."/>
            <person name="Lewis M.R."/>
            <person name="Radune D."/>
            <person name="Fedorova N.B."/>
            <person name="Scanlan D."/>
            <person name="Khouri H.M."/>
            <person name="Mulligan S."/>
            <person name="Carty H.A."/>
            <person name="Cline R.T."/>
            <person name="Van Aken S.E."/>
            <person name="Gill J."/>
            <person name="Scarselli M."/>
            <person name="Mora M."/>
            <person name="Iacobini E.T."/>
            <person name="Brettoni C."/>
            <person name="Galli G."/>
            <person name="Mariani M."/>
            <person name="Vegni F."/>
            <person name="Maione D."/>
            <person name="Rinaudo D."/>
            <person name="Rappuoli R."/>
            <person name="Telford J.L."/>
            <person name="Kasper D.L."/>
            <person name="Grandi G."/>
            <person name="Fraser C.M."/>
        </authorList>
    </citation>
    <scope>NUCLEOTIDE SEQUENCE [LARGE SCALE GENOMIC DNA]</scope>
    <source>
        <strain>ATCC BAA-611 / 2603 V/R</strain>
    </source>
</reference>
<sequence>MSITKEFDTIAAISTPLGEGAIGIVRISGTDALKIASKIYRGKDLSAIQSHTLNYGHIVDPDKNEILDEVMLGVMLAPKTFTREDVIEINTHGGIAVTNEILQLILRHGARMAEPGEFTKRAFLNGRVDLTQAEAVMDLIRAKTDKAMDIAVKQLDGSLKTLINNTRQEILNTLAQVEVNIDYPEYDDVEEMTTTLMREKTQEFQALMENLLRTARRGKILREGLSTAIIGRPNVGKSSLLNNLLREEKAIVTDIEGTTRDVIEEYVNIKGVPLKLVDTAGIRDTDDIVEKIGVERSKKALEEADLVLLVLNSSEPLTLQDRSLLELSKESNRIVLLNKTDLPQKIEVNELPKNVIPISVLENENIDKIEERINDIFFDNAGMVEHDATYLSNARHISLIEKAVDSLKAVNEGLELGMPVDLLQVDMTRTWEILGEITGDAAPDELITQLFSQFCLGK</sequence>
<proteinExistence type="inferred from homology"/>
<comment type="function">
    <text evidence="1">Exhibits a very high intrinsic GTPase hydrolysis rate. Involved in the addition of a carboxymethylaminomethyl (cmnm) group at the wobble position (U34) of certain tRNAs, forming tRNA-cmnm(5)s(2)U34.</text>
</comment>
<comment type="cofactor">
    <cofactor evidence="1">
        <name>K(+)</name>
        <dbReference type="ChEBI" id="CHEBI:29103"/>
    </cofactor>
    <text evidence="1">Binds 1 potassium ion per subunit.</text>
</comment>
<comment type="subunit">
    <text evidence="1">Homodimer. Heterotetramer of two MnmE and two MnmG subunits.</text>
</comment>
<comment type="subcellular location">
    <subcellularLocation>
        <location evidence="1">Cytoplasm</location>
    </subcellularLocation>
</comment>
<comment type="similarity">
    <text evidence="1">Belongs to the TRAFAC class TrmE-Era-EngA-EngB-Septin-like GTPase superfamily. TrmE GTPase family.</text>
</comment>
<organism>
    <name type="scientific">Streptococcus agalactiae serotype V (strain ATCC BAA-611 / 2603 V/R)</name>
    <dbReference type="NCBI Taxonomy" id="208435"/>
    <lineage>
        <taxon>Bacteria</taxon>
        <taxon>Bacillati</taxon>
        <taxon>Bacillota</taxon>
        <taxon>Bacilli</taxon>
        <taxon>Lactobacillales</taxon>
        <taxon>Streptococcaceae</taxon>
        <taxon>Streptococcus</taxon>
    </lineage>
</organism>
<evidence type="ECO:0000255" key="1">
    <source>
        <dbReference type="HAMAP-Rule" id="MF_00379"/>
    </source>
</evidence>
<feature type="chain" id="PRO_0000188927" description="tRNA modification GTPase MnmE">
    <location>
        <begin position="1"/>
        <end position="458"/>
    </location>
</feature>
<feature type="domain" description="TrmE-type G">
    <location>
        <begin position="224"/>
        <end position="378"/>
    </location>
</feature>
<feature type="binding site" evidence="1">
    <location>
        <position position="26"/>
    </location>
    <ligand>
        <name>(6S)-5-formyl-5,6,7,8-tetrahydrofolate</name>
        <dbReference type="ChEBI" id="CHEBI:57457"/>
    </ligand>
</feature>
<feature type="binding site" evidence="1">
    <location>
        <position position="88"/>
    </location>
    <ligand>
        <name>(6S)-5-formyl-5,6,7,8-tetrahydrofolate</name>
        <dbReference type="ChEBI" id="CHEBI:57457"/>
    </ligand>
</feature>
<feature type="binding site" evidence="1">
    <location>
        <position position="127"/>
    </location>
    <ligand>
        <name>(6S)-5-formyl-5,6,7,8-tetrahydrofolate</name>
        <dbReference type="ChEBI" id="CHEBI:57457"/>
    </ligand>
</feature>
<feature type="binding site" evidence="1">
    <location>
        <begin position="234"/>
        <end position="239"/>
    </location>
    <ligand>
        <name>GTP</name>
        <dbReference type="ChEBI" id="CHEBI:37565"/>
    </ligand>
</feature>
<feature type="binding site" evidence="1">
    <location>
        <position position="234"/>
    </location>
    <ligand>
        <name>K(+)</name>
        <dbReference type="ChEBI" id="CHEBI:29103"/>
    </ligand>
</feature>
<feature type="binding site" evidence="1">
    <location>
        <position position="238"/>
    </location>
    <ligand>
        <name>Mg(2+)</name>
        <dbReference type="ChEBI" id="CHEBI:18420"/>
    </ligand>
</feature>
<feature type="binding site" evidence="1">
    <location>
        <begin position="253"/>
        <end position="259"/>
    </location>
    <ligand>
        <name>GTP</name>
        <dbReference type="ChEBI" id="CHEBI:37565"/>
    </ligand>
</feature>
<feature type="binding site" evidence="1">
    <location>
        <position position="253"/>
    </location>
    <ligand>
        <name>K(+)</name>
        <dbReference type="ChEBI" id="CHEBI:29103"/>
    </ligand>
</feature>
<feature type="binding site" evidence="1">
    <location>
        <position position="255"/>
    </location>
    <ligand>
        <name>K(+)</name>
        <dbReference type="ChEBI" id="CHEBI:29103"/>
    </ligand>
</feature>
<feature type="binding site" evidence="1">
    <location>
        <position position="258"/>
    </location>
    <ligand>
        <name>K(+)</name>
        <dbReference type="ChEBI" id="CHEBI:29103"/>
    </ligand>
</feature>
<feature type="binding site" evidence="1">
    <location>
        <position position="259"/>
    </location>
    <ligand>
        <name>Mg(2+)</name>
        <dbReference type="ChEBI" id="CHEBI:18420"/>
    </ligand>
</feature>
<feature type="binding site" evidence="1">
    <location>
        <begin position="278"/>
        <end position="281"/>
    </location>
    <ligand>
        <name>GTP</name>
        <dbReference type="ChEBI" id="CHEBI:37565"/>
    </ligand>
</feature>
<feature type="binding site" evidence="1">
    <location>
        <position position="458"/>
    </location>
    <ligand>
        <name>(6S)-5-formyl-5,6,7,8-tetrahydrofolate</name>
        <dbReference type="ChEBI" id="CHEBI:57457"/>
    </ligand>
</feature>
<keyword id="KW-0963">Cytoplasm</keyword>
<keyword id="KW-0342">GTP-binding</keyword>
<keyword id="KW-0378">Hydrolase</keyword>
<keyword id="KW-0460">Magnesium</keyword>
<keyword id="KW-0479">Metal-binding</keyword>
<keyword id="KW-0547">Nucleotide-binding</keyword>
<keyword id="KW-0630">Potassium</keyword>
<keyword id="KW-1185">Reference proteome</keyword>
<keyword id="KW-0819">tRNA processing</keyword>